<keyword id="KW-0028">Amino-acid biosynthesis</keyword>
<keyword id="KW-0055">Arginine biosynthesis</keyword>
<keyword id="KW-0067">ATP-binding</keyword>
<keyword id="KW-0963">Cytoplasm</keyword>
<keyword id="KW-0418">Kinase</keyword>
<keyword id="KW-0547">Nucleotide-binding</keyword>
<keyword id="KW-0808">Transferase</keyword>
<proteinExistence type="inferred from homology"/>
<sequence length="257" mass="27261">MGKTIVIKCGGSVLSDLSPSFFTSLQEMYAQGMNIVLVHGGGPEIGQMLKRLNVPSEFVNGLRKTTKEVLEVAEMVLAGKVNKQLVALLRQHGLPAVGVSGVDACLLQAAPIDLAKLGYVGEVVNVNADFVHQLLKSRYIPIISPIGADKDGQKYNINADTAAGAVAKAIKAAQLLFVTDVPGILRNGSIVEQATIDVIERMMNEGIITGGMIPKVKAAIAALSESLHEVMIVSGKTPFYENGQLHGTTIRNEVGVY</sequence>
<dbReference type="EC" id="2.7.2.8" evidence="1"/>
<dbReference type="EMBL" id="CP001638">
    <property type="protein sequence ID" value="ACS23624.1"/>
    <property type="molecule type" value="Genomic_DNA"/>
</dbReference>
<dbReference type="SMR" id="C5D766"/>
<dbReference type="STRING" id="471223.GWCH70_0738"/>
<dbReference type="KEGG" id="gwc:GWCH70_0738"/>
<dbReference type="eggNOG" id="COG0548">
    <property type="taxonomic scope" value="Bacteria"/>
</dbReference>
<dbReference type="HOGENOM" id="CLU_053680_1_0_9"/>
<dbReference type="OrthoDB" id="9803155at2"/>
<dbReference type="UniPathway" id="UPA00068">
    <property type="reaction ID" value="UER00107"/>
</dbReference>
<dbReference type="GO" id="GO:0005737">
    <property type="term" value="C:cytoplasm"/>
    <property type="evidence" value="ECO:0007669"/>
    <property type="project" value="UniProtKB-SubCell"/>
</dbReference>
<dbReference type="GO" id="GO:0003991">
    <property type="term" value="F:acetylglutamate kinase activity"/>
    <property type="evidence" value="ECO:0007669"/>
    <property type="project" value="UniProtKB-UniRule"/>
</dbReference>
<dbReference type="GO" id="GO:0005524">
    <property type="term" value="F:ATP binding"/>
    <property type="evidence" value="ECO:0007669"/>
    <property type="project" value="UniProtKB-UniRule"/>
</dbReference>
<dbReference type="GO" id="GO:0042450">
    <property type="term" value="P:arginine biosynthetic process via ornithine"/>
    <property type="evidence" value="ECO:0007669"/>
    <property type="project" value="UniProtKB-UniRule"/>
</dbReference>
<dbReference type="GO" id="GO:0006526">
    <property type="term" value="P:L-arginine biosynthetic process"/>
    <property type="evidence" value="ECO:0007669"/>
    <property type="project" value="UniProtKB-UniPathway"/>
</dbReference>
<dbReference type="CDD" id="cd04238">
    <property type="entry name" value="AAK_NAGK-like"/>
    <property type="match status" value="1"/>
</dbReference>
<dbReference type="FunFam" id="3.40.1160.10:FF:000004">
    <property type="entry name" value="Acetylglutamate kinase"/>
    <property type="match status" value="1"/>
</dbReference>
<dbReference type="Gene3D" id="3.40.1160.10">
    <property type="entry name" value="Acetylglutamate kinase-like"/>
    <property type="match status" value="1"/>
</dbReference>
<dbReference type="HAMAP" id="MF_00082">
    <property type="entry name" value="ArgB"/>
    <property type="match status" value="1"/>
</dbReference>
<dbReference type="InterPro" id="IPR036393">
    <property type="entry name" value="AceGlu_kinase-like_sf"/>
</dbReference>
<dbReference type="InterPro" id="IPR004662">
    <property type="entry name" value="AcgluKinase_fam"/>
</dbReference>
<dbReference type="InterPro" id="IPR037528">
    <property type="entry name" value="ArgB"/>
</dbReference>
<dbReference type="InterPro" id="IPR001048">
    <property type="entry name" value="Asp/Glu/Uridylate_kinase"/>
</dbReference>
<dbReference type="InterPro" id="IPR001057">
    <property type="entry name" value="Glu/AcGlu_kinase"/>
</dbReference>
<dbReference type="NCBIfam" id="TIGR00761">
    <property type="entry name" value="argB"/>
    <property type="match status" value="1"/>
</dbReference>
<dbReference type="PANTHER" id="PTHR23342">
    <property type="entry name" value="N-ACETYLGLUTAMATE SYNTHASE"/>
    <property type="match status" value="1"/>
</dbReference>
<dbReference type="PANTHER" id="PTHR23342:SF0">
    <property type="entry name" value="N-ACETYLGLUTAMATE SYNTHASE, MITOCHONDRIAL"/>
    <property type="match status" value="1"/>
</dbReference>
<dbReference type="Pfam" id="PF00696">
    <property type="entry name" value="AA_kinase"/>
    <property type="match status" value="1"/>
</dbReference>
<dbReference type="PIRSF" id="PIRSF000728">
    <property type="entry name" value="NAGK"/>
    <property type="match status" value="1"/>
</dbReference>
<dbReference type="PRINTS" id="PR00474">
    <property type="entry name" value="GLU5KINASE"/>
</dbReference>
<dbReference type="SUPFAM" id="SSF53633">
    <property type="entry name" value="Carbamate kinase-like"/>
    <property type="match status" value="1"/>
</dbReference>
<evidence type="ECO:0000255" key="1">
    <source>
        <dbReference type="HAMAP-Rule" id="MF_00082"/>
    </source>
</evidence>
<gene>
    <name evidence="1" type="primary">argB</name>
    <name type="ordered locus">GWCH70_0738</name>
</gene>
<name>ARGB_GEOSW</name>
<reference key="1">
    <citation type="submission" date="2009-06" db="EMBL/GenBank/DDBJ databases">
        <title>Complete sequence of chromosome of Geopacillus sp. WCH70.</title>
        <authorList>
            <consortium name="US DOE Joint Genome Institute"/>
            <person name="Lucas S."/>
            <person name="Copeland A."/>
            <person name="Lapidus A."/>
            <person name="Glavina del Rio T."/>
            <person name="Dalin E."/>
            <person name="Tice H."/>
            <person name="Bruce D."/>
            <person name="Goodwin L."/>
            <person name="Pitluck S."/>
            <person name="Chertkov O."/>
            <person name="Brettin T."/>
            <person name="Detter J.C."/>
            <person name="Han C."/>
            <person name="Larimer F."/>
            <person name="Land M."/>
            <person name="Hauser L."/>
            <person name="Kyrpides N."/>
            <person name="Mikhailova N."/>
            <person name="Brumm P."/>
            <person name="Mead D.A."/>
            <person name="Richardson P."/>
        </authorList>
    </citation>
    <scope>NUCLEOTIDE SEQUENCE [LARGE SCALE GENOMIC DNA]</scope>
    <source>
        <strain>WCH70</strain>
    </source>
</reference>
<protein>
    <recommendedName>
        <fullName evidence="1">Acetylglutamate kinase</fullName>
        <ecNumber evidence="1">2.7.2.8</ecNumber>
    </recommendedName>
    <alternativeName>
        <fullName evidence="1">N-acetyl-L-glutamate 5-phosphotransferase</fullName>
    </alternativeName>
    <alternativeName>
        <fullName evidence="1">NAG kinase</fullName>
        <shortName evidence="1">NAGK</shortName>
    </alternativeName>
</protein>
<feature type="chain" id="PRO_1000202563" description="Acetylglutamate kinase">
    <location>
        <begin position="1"/>
        <end position="257"/>
    </location>
</feature>
<feature type="binding site" evidence="1">
    <location>
        <begin position="41"/>
        <end position="42"/>
    </location>
    <ligand>
        <name>substrate</name>
    </ligand>
</feature>
<feature type="binding site" evidence="1">
    <location>
        <position position="63"/>
    </location>
    <ligand>
        <name>substrate</name>
    </ligand>
</feature>
<feature type="binding site" evidence="1">
    <location>
        <position position="156"/>
    </location>
    <ligand>
        <name>substrate</name>
    </ligand>
</feature>
<feature type="site" description="Transition state stabilizer" evidence="1">
    <location>
        <position position="8"/>
    </location>
</feature>
<feature type="site" description="Transition state stabilizer" evidence="1">
    <location>
        <position position="215"/>
    </location>
</feature>
<organism>
    <name type="scientific">Geobacillus sp. (strain WCH70)</name>
    <dbReference type="NCBI Taxonomy" id="471223"/>
    <lineage>
        <taxon>Bacteria</taxon>
        <taxon>Bacillati</taxon>
        <taxon>Bacillota</taxon>
        <taxon>Bacilli</taxon>
        <taxon>Bacillales</taxon>
        <taxon>Anoxybacillaceae</taxon>
        <taxon>Geobacillus</taxon>
    </lineage>
</organism>
<comment type="function">
    <text evidence="1">Catalyzes the ATP-dependent phosphorylation of N-acetyl-L-glutamate.</text>
</comment>
<comment type="catalytic activity">
    <reaction evidence="1">
        <text>N-acetyl-L-glutamate + ATP = N-acetyl-L-glutamyl 5-phosphate + ADP</text>
        <dbReference type="Rhea" id="RHEA:14629"/>
        <dbReference type="ChEBI" id="CHEBI:30616"/>
        <dbReference type="ChEBI" id="CHEBI:44337"/>
        <dbReference type="ChEBI" id="CHEBI:57936"/>
        <dbReference type="ChEBI" id="CHEBI:456216"/>
        <dbReference type="EC" id="2.7.2.8"/>
    </reaction>
</comment>
<comment type="pathway">
    <text evidence="1">Amino-acid biosynthesis; L-arginine biosynthesis; N(2)-acetyl-L-ornithine from L-glutamate: step 2/4.</text>
</comment>
<comment type="subcellular location">
    <subcellularLocation>
        <location evidence="1">Cytoplasm</location>
    </subcellularLocation>
</comment>
<comment type="similarity">
    <text evidence="1">Belongs to the acetylglutamate kinase family. ArgB subfamily.</text>
</comment>
<accession>C5D766</accession>